<dbReference type="EMBL" id="CP001114">
    <property type="protein sequence ID" value="ACO46870.1"/>
    <property type="molecule type" value="Genomic_DNA"/>
</dbReference>
<dbReference type="RefSeq" id="WP_012693992.1">
    <property type="nucleotide sequence ID" value="NC_012526.1"/>
</dbReference>
<dbReference type="SMR" id="C1CXF3"/>
<dbReference type="STRING" id="546414.Deide_18820"/>
<dbReference type="PaxDb" id="546414-Deide_18820"/>
<dbReference type="KEGG" id="ddr:Deide_18820"/>
<dbReference type="eggNOG" id="COG0199">
    <property type="taxonomic scope" value="Bacteria"/>
</dbReference>
<dbReference type="HOGENOM" id="CLU_139869_3_0_0"/>
<dbReference type="OrthoDB" id="9810484at2"/>
<dbReference type="Proteomes" id="UP000002208">
    <property type="component" value="Chromosome"/>
</dbReference>
<dbReference type="GO" id="GO:0005737">
    <property type="term" value="C:cytoplasm"/>
    <property type="evidence" value="ECO:0007669"/>
    <property type="project" value="UniProtKB-ARBA"/>
</dbReference>
<dbReference type="GO" id="GO:0015935">
    <property type="term" value="C:small ribosomal subunit"/>
    <property type="evidence" value="ECO:0007669"/>
    <property type="project" value="TreeGrafter"/>
</dbReference>
<dbReference type="GO" id="GO:0019843">
    <property type="term" value="F:rRNA binding"/>
    <property type="evidence" value="ECO:0007669"/>
    <property type="project" value="UniProtKB-UniRule"/>
</dbReference>
<dbReference type="GO" id="GO:0003735">
    <property type="term" value="F:structural constituent of ribosome"/>
    <property type="evidence" value="ECO:0007669"/>
    <property type="project" value="InterPro"/>
</dbReference>
<dbReference type="GO" id="GO:0008270">
    <property type="term" value="F:zinc ion binding"/>
    <property type="evidence" value="ECO:0007669"/>
    <property type="project" value="UniProtKB-UniRule"/>
</dbReference>
<dbReference type="GO" id="GO:0006412">
    <property type="term" value="P:translation"/>
    <property type="evidence" value="ECO:0007669"/>
    <property type="project" value="UniProtKB-UniRule"/>
</dbReference>
<dbReference type="FunFam" id="4.10.830.10:FF:000001">
    <property type="entry name" value="30S ribosomal protein S14 type Z"/>
    <property type="match status" value="1"/>
</dbReference>
<dbReference type="Gene3D" id="4.10.830.10">
    <property type="entry name" value="30s Ribosomal Protein S14, Chain N"/>
    <property type="match status" value="1"/>
</dbReference>
<dbReference type="HAMAP" id="MF_01364_B">
    <property type="entry name" value="Ribosomal_uS14_2_B"/>
    <property type="match status" value="1"/>
</dbReference>
<dbReference type="InterPro" id="IPR001209">
    <property type="entry name" value="Ribosomal_uS14"/>
</dbReference>
<dbReference type="InterPro" id="IPR023053">
    <property type="entry name" value="Ribosomal_uS14_bact"/>
</dbReference>
<dbReference type="InterPro" id="IPR018271">
    <property type="entry name" value="Ribosomal_uS14_CS"/>
</dbReference>
<dbReference type="InterPro" id="IPR043140">
    <property type="entry name" value="Ribosomal_uS14_sf"/>
</dbReference>
<dbReference type="NCBIfam" id="NF005974">
    <property type="entry name" value="PRK08061.1"/>
    <property type="match status" value="1"/>
</dbReference>
<dbReference type="PANTHER" id="PTHR19836">
    <property type="entry name" value="30S RIBOSOMAL PROTEIN S14"/>
    <property type="match status" value="1"/>
</dbReference>
<dbReference type="PANTHER" id="PTHR19836:SF19">
    <property type="entry name" value="SMALL RIBOSOMAL SUBUNIT PROTEIN US14M"/>
    <property type="match status" value="1"/>
</dbReference>
<dbReference type="Pfam" id="PF00253">
    <property type="entry name" value="Ribosomal_S14"/>
    <property type="match status" value="1"/>
</dbReference>
<dbReference type="SUPFAM" id="SSF57716">
    <property type="entry name" value="Glucocorticoid receptor-like (DNA-binding domain)"/>
    <property type="match status" value="1"/>
</dbReference>
<dbReference type="PROSITE" id="PS00527">
    <property type="entry name" value="RIBOSOMAL_S14"/>
    <property type="match status" value="1"/>
</dbReference>
<organism>
    <name type="scientific">Deinococcus deserti (strain DSM 17065 / CIP 109153 / LMG 22923 / VCD115)</name>
    <dbReference type="NCBI Taxonomy" id="546414"/>
    <lineage>
        <taxon>Bacteria</taxon>
        <taxon>Thermotogati</taxon>
        <taxon>Deinococcota</taxon>
        <taxon>Deinococci</taxon>
        <taxon>Deinococcales</taxon>
        <taxon>Deinococcaceae</taxon>
        <taxon>Deinococcus</taxon>
    </lineage>
</organism>
<keyword id="KW-0479">Metal-binding</keyword>
<keyword id="KW-1185">Reference proteome</keyword>
<keyword id="KW-0687">Ribonucleoprotein</keyword>
<keyword id="KW-0689">Ribosomal protein</keyword>
<keyword id="KW-0694">RNA-binding</keyword>
<keyword id="KW-0699">rRNA-binding</keyword>
<keyword id="KW-0862">Zinc</keyword>
<sequence>MANTSKVVKAARGHKFAVQNYSRCSRCGRARGYYRFFGMCRICIREMAHKGELPGVKKSSW</sequence>
<name>RS14Z_DEIDV</name>
<gene>
    <name evidence="1" type="primary">rpsZ</name>
    <name evidence="1" type="synonym">rpsN</name>
    <name type="ordered locus">Deide_18820</name>
</gene>
<feature type="chain" id="PRO_1000214908" description="Small ribosomal subunit protein uS14">
    <location>
        <begin position="1"/>
        <end position="61"/>
    </location>
</feature>
<feature type="binding site" evidence="1">
    <location>
        <position position="24"/>
    </location>
    <ligand>
        <name>Zn(2+)</name>
        <dbReference type="ChEBI" id="CHEBI:29105"/>
    </ligand>
</feature>
<feature type="binding site" evidence="1">
    <location>
        <position position="27"/>
    </location>
    <ligand>
        <name>Zn(2+)</name>
        <dbReference type="ChEBI" id="CHEBI:29105"/>
    </ligand>
</feature>
<feature type="binding site" evidence="1">
    <location>
        <position position="40"/>
    </location>
    <ligand>
        <name>Zn(2+)</name>
        <dbReference type="ChEBI" id="CHEBI:29105"/>
    </ligand>
</feature>
<feature type="binding site" evidence="1">
    <location>
        <position position="43"/>
    </location>
    <ligand>
        <name>Zn(2+)</name>
        <dbReference type="ChEBI" id="CHEBI:29105"/>
    </ligand>
</feature>
<comment type="function">
    <text evidence="1">Binds 16S rRNA, required for the assembly of 30S particles and may also be responsible for determining the conformation of the 16S rRNA at the A site.</text>
</comment>
<comment type="cofactor">
    <cofactor evidence="1">
        <name>Zn(2+)</name>
        <dbReference type="ChEBI" id="CHEBI:29105"/>
    </cofactor>
    <text evidence="1">Binds 1 zinc ion per subunit.</text>
</comment>
<comment type="subunit">
    <text evidence="1">Part of the 30S ribosomal subunit. Contacts proteins S3 and S10.</text>
</comment>
<comment type="similarity">
    <text evidence="1">Belongs to the universal ribosomal protein uS14 family. Zinc-binding uS14 subfamily.</text>
</comment>
<protein>
    <recommendedName>
        <fullName evidence="1">Small ribosomal subunit protein uS14</fullName>
    </recommendedName>
    <alternativeName>
        <fullName evidence="2">30S ribosomal protein S14 type Z</fullName>
    </alternativeName>
</protein>
<reference key="1">
    <citation type="journal article" date="2009" name="PLoS Genet.">
        <title>Alliance of proteomics and genomics to unravel the specificities of Sahara bacterium Deinococcus deserti.</title>
        <authorList>
            <person name="de Groot A."/>
            <person name="Dulermo R."/>
            <person name="Ortet P."/>
            <person name="Blanchard L."/>
            <person name="Guerin P."/>
            <person name="Fernandez B."/>
            <person name="Vacherie B."/>
            <person name="Dossat C."/>
            <person name="Jolivet E."/>
            <person name="Siguier P."/>
            <person name="Chandler M."/>
            <person name="Barakat M."/>
            <person name="Dedieu A."/>
            <person name="Barbe V."/>
            <person name="Heulin T."/>
            <person name="Sommer S."/>
            <person name="Achouak W."/>
            <person name="Armengaud J."/>
        </authorList>
    </citation>
    <scope>NUCLEOTIDE SEQUENCE [LARGE SCALE GENOMIC DNA]</scope>
    <source>
        <strain>DSM 17065 / CIP 109153 / LMG 22923 / VCD115</strain>
    </source>
</reference>
<proteinExistence type="inferred from homology"/>
<evidence type="ECO:0000255" key="1">
    <source>
        <dbReference type="HAMAP-Rule" id="MF_01364"/>
    </source>
</evidence>
<evidence type="ECO:0000305" key="2"/>
<accession>C1CXF3</accession>